<evidence type="ECO:0000255" key="1">
    <source>
        <dbReference type="HAMAP-Rule" id="MF_00482"/>
    </source>
</evidence>
<geneLocation type="chloroplast"/>
<dbReference type="EC" id="1.97.1.12" evidence="1"/>
<dbReference type="EMBL" id="AF494278">
    <property type="protein sequence ID" value="AAM96533.1"/>
    <property type="molecule type" value="Genomic_DNA"/>
</dbReference>
<dbReference type="RefSeq" id="NP_683830.1">
    <property type="nucleotide sequence ID" value="NC_004115.1"/>
</dbReference>
<dbReference type="SMR" id="Q8M9V9"/>
<dbReference type="GeneID" id="860689"/>
<dbReference type="GO" id="GO:0009535">
    <property type="term" value="C:chloroplast thylakoid membrane"/>
    <property type="evidence" value="ECO:0007669"/>
    <property type="project" value="UniProtKB-SubCell"/>
</dbReference>
<dbReference type="GO" id="GO:0009522">
    <property type="term" value="C:photosystem I"/>
    <property type="evidence" value="ECO:0007669"/>
    <property type="project" value="UniProtKB-KW"/>
</dbReference>
<dbReference type="GO" id="GO:0051539">
    <property type="term" value="F:4 iron, 4 sulfur cluster binding"/>
    <property type="evidence" value="ECO:0007669"/>
    <property type="project" value="UniProtKB-KW"/>
</dbReference>
<dbReference type="GO" id="GO:0016168">
    <property type="term" value="F:chlorophyll binding"/>
    <property type="evidence" value="ECO:0007669"/>
    <property type="project" value="UniProtKB-KW"/>
</dbReference>
<dbReference type="GO" id="GO:0009055">
    <property type="term" value="F:electron transfer activity"/>
    <property type="evidence" value="ECO:0007669"/>
    <property type="project" value="UniProtKB-UniRule"/>
</dbReference>
<dbReference type="GO" id="GO:0000287">
    <property type="term" value="F:magnesium ion binding"/>
    <property type="evidence" value="ECO:0007669"/>
    <property type="project" value="UniProtKB-UniRule"/>
</dbReference>
<dbReference type="GO" id="GO:0016491">
    <property type="term" value="F:oxidoreductase activity"/>
    <property type="evidence" value="ECO:0007669"/>
    <property type="project" value="UniProtKB-KW"/>
</dbReference>
<dbReference type="GO" id="GO:0015979">
    <property type="term" value="P:photosynthesis"/>
    <property type="evidence" value="ECO:0007669"/>
    <property type="project" value="UniProtKB-UniRule"/>
</dbReference>
<dbReference type="FunFam" id="1.20.1130.10:FF:000001">
    <property type="entry name" value="Photosystem I P700 chlorophyll a apoprotein A2"/>
    <property type="match status" value="1"/>
</dbReference>
<dbReference type="Gene3D" id="1.20.1130.10">
    <property type="entry name" value="Photosystem I PsaA/PsaB"/>
    <property type="match status" value="1"/>
</dbReference>
<dbReference type="HAMAP" id="MF_00482">
    <property type="entry name" value="PSI_PsaB"/>
    <property type="match status" value="1"/>
</dbReference>
<dbReference type="InterPro" id="IPR001280">
    <property type="entry name" value="PSI_PsaA/B"/>
</dbReference>
<dbReference type="InterPro" id="IPR020586">
    <property type="entry name" value="PSI_PsaA/B_CS"/>
</dbReference>
<dbReference type="InterPro" id="IPR036408">
    <property type="entry name" value="PSI_PsaA/B_sf"/>
</dbReference>
<dbReference type="InterPro" id="IPR006244">
    <property type="entry name" value="PSI_PsaB"/>
</dbReference>
<dbReference type="NCBIfam" id="TIGR01336">
    <property type="entry name" value="psaB"/>
    <property type="match status" value="1"/>
</dbReference>
<dbReference type="PANTHER" id="PTHR30128">
    <property type="entry name" value="OUTER MEMBRANE PROTEIN, OMPA-RELATED"/>
    <property type="match status" value="1"/>
</dbReference>
<dbReference type="PANTHER" id="PTHR30128:SF19">
    <property type="entry name" value="PHOTOSYSTEM I P700 CHLOROPHYLL A APOPROTEIN A1-RELATED"/>
    <property type="match status" value="1"/>
</dbReference>
<dbReference type="Pfam" id="PF00223">
    <property type="entry name" value="PsaA_PsaB"/>
    <property type="match status" value="1"/>
</dbReference>
<dbReference type="PIRSF" id="PIRSF002905">
    <property type="entry name" value="PSI_A"/>
    <property type="match status" value="1"/>
</dbReference>
<dbReference type="PRINTS" id="PR00257">
    <property type="entry name" value="PHOTSYSPSAAB"/>
</dbReference>
<dbReference type="SUPFAM" id="SSF81558">
    <property type="entry name" value="Photosystem I subunits PsaA/PsaB"/>
    <property type="match status" value="1"/>
</dbReference>
<dbReference type="PROSITE" id="PS00419">
    <property type="entry name" value="PHOTOSYSTEM_I_PSAAB"/>
    <property type="match status" value="1"/>
</dbReference>
<reference key="1">
    <citation type="journal article" date="2002" name="Proc. Natl. Acad. Sci. U.S.A.">
        <title>The chloroplast and mitochondrial genome sequences of the charophyte Chaetosphaeridium globosum: insights into the timing of the events that restructured organelle DNAs within the green algal lineage that led to land plants.</title>
        <authorList>
            <person name="Turmel M."/>
            <person name="Otis C."/>
            <person name="Lemieux C."/>
        </authorList>
    </citation>
    <scope>NUCLEOTIDE SEQUENCE [LARGE SCALE GENOMIC DNA]</scope>
    <source>
        <strain>M1311</strain>
    </source>
</reference>
<name>PSAB_CHAGL</name>
<feature type="chain" id="PRO_0000088607" description="Photosystem I P700 chlorophyll a apoprotein A2">
    <location>
        <begin position="1"/>
        <end position="734"/>
    </location>
</feature>
<feature type="transmembrane region" description="Helical; Name=I" evidence="1">
    <location>
        <begin position="46"/>
        <end position="69"/>
    </location>
</feature>
<feature type="transmembrane region" description="Helical; Name=II" evidence="1">
    <location>
        <begin position="135"/>
        <end position="158"/>
    </location>
</feature>
<feature type="transmembrane region" description="Helical; Name=III" evidence="1">
    <location>
        <begin position="175"/>
        <end position="199"/>
    </location>
</feature>
<feature type="transmembrane region" description="Helical; Name=IV" evidence="1">
    <location>
        <begin position="273"/>
        <end position="291"/>
    </location>
</feature>
<feature type="transmembrane region" description="Helical; Name=V" evidence="1">
    <location>
        <begin position="330"/>
        <end position="353"/>
    </location>
</feature>
<feature type="transmembrane region" description="Helical; Name=VI" evidence="1">
    <location>
        <begin position="369"/>
        <end position="395"/>
    </location>
</feature>
<feature type="transmembrane region" description="Helical; Name=VII" evidence="1">
    <location>
        <begin position="417"/>
        <end position="439"/>
    </location>
</feature>
<feature type="transmembrane region" description="Helical; Name=VIII" evidence="1">
    <location>
        <begin position="517"/>
        <end position="535"/>
    </location>
</feature>
<feature type="transmembrane region" description="Helical; Name=IX" evidence="1">
    <location>
        <begin position="575"/>
        <end position="596"/>
    </location>
</feature>
<feature type="transmembrane region" description="Helical; Name=X" evidence="1">
    <location>
        <begin position="643"/>
        <end position="665"/>
    </location>
</feature>
<feature type="transmembrane region" description="Helical; Name=XI" evidence="1">
    <location>
        <begin position="707"/>
        <end position="727"/>
    </location>
</feature>
<feature type="binding site" evidence="1">
    <location>
        <position position="559"/>
    </location>
    <ligand>
        <name>[4Fe-4S] cluster</name>
        <dbReference type="ChEBI" id="CHEBI:49883"/>
        <note>ligand shared between dimeric partners</note>
    </ligand>
</feature>
<feature type="binding site" evidence="1">
    <location>
        <position position="568"/>
    </location>
    <ligand>
        <name>[4Fe-4S] cluster</name>
        <dbReference type="ChEBI" id="CHEBI:49883"/>
        <note>ligand shared between dimeric partners</note>
    </ligand>
</feature>
<feature type="binding site" description="axial binding residue" evidence="1">
    <location>
        <position position="654"/>
    </location>
    <ligand>
        <name>chlorophyll a</name>
        <dbReference type="ChEBI" id="CHEBI:58416"/>
        <label>B1</label>
    </ligand>
    <ligandPart>
        <name>Mg</name>
        <dbReference type="ChEBI" id="CHEBI:25107"/>
    </ligandPart>
</feature>
<feature type="binding site" description="axial binding residue" evidence="1">
    <location>
        <position position="662"/>
    </location>
    <ligand>
        <name>chlorophyll a</name>
        <dbReference type="ChEBI" id="CHEBI:58416"/>
        <label>B3</label>
    </ligand>
    <ligandPart>
        <name>Mg</name>
        <dbReference type="ChEBI" id="CHEBI:25107"/>
    </ligandPart>
</feature>
<feature type="binding site" evidence="1">
    <location>
        <position position="670"/>
    </location>
    <ligand>
        <name>chlorophyll a</name>
        <dbReference type="ChEBI" id="CHEBI:58416"/>
        <label>B3</label>
    </ligand>
</feature>
<feature type="binding site" evidence="1">
    <location>
        <position position="671"/>
    </location>
    <ligand>
        <name>phylloquinone</name>
        <dbReference type="ChEBI" id="CHEBI:18067"/>
        <label>B</label>
    </ligand>
</feature>
<gene>
    <name evidence="1" type="primary">psaB</name>
</gene>
<organism>
    <name type="scientific">Chaetosphaeridium globosum</name>
    <name type="common">Charophycean green alga</name>
    <name type="synonym">Herposteiron globosum</name>
    <dbReference type="NCBI Taxonomy" id="96477"/>
    <lineage>
        <taxon>Eukaryota</taxon>
        <taxon>Viridiplantae</taxon>
        <taxon>Streptophyta</taxon>
        <taxon>Coleochaetophyceae</taxon>
        <taxon>Coleochaetales</taxon>
        <taxon>Chaetosphaeridiaceae</taxon>
        <taxon>Chaetosphaeridium</taxon>
    </lineage>
</organism>
<comment type="function">
    <text evidence="1">PsaA and PsaB bind P700, the primary electron donor of photosystem I (PSI), as well as the electron acceptors A0, A1 and FX. PSI is a plastocyanin-ferredoxin oxidoreductase, converting photonic excitation into a charge separation, which transfers an electron from the donor P700 chlorophyll pair to the spectroscopically characterized acceptors A0, A1, FX, FA and FB in turn. Oxidized P700 is reduced on the lumenal side of the thylakoid membrane by plastocyanin.</text>
</comment>
<comment type="catalytic activity">
    <reaction evidence="1">
        <text>reduced [plastocyanin] + hnu + oxidized [2Fe-2S]-[ferredoxin] = oxidized [plastocyanin] + reduced [2Fe-2S]-[ferredoxin]</text>
        <dbReference type="Rhea" id="RHEA:30407"/>
        <dbReference type="Rhea" id="RHEA-COMP:10000"/>
        <dbReference type="Rhea" id="RHEA-COMP:10001"/>
        <dbReference type="Rhea" id="RHEA-COMP:10039"/>
        <dbReference type="Rhea" id="RHEA-COMP:10040"/>
        <dbReference type="ChEBI" id="CHEBI:29036"/>
        <dbReference type="ChEBI" id="CHEBI:30212"/>
        <dbReference type="ChEBI" id="CHEBI:33737"/>
        <dbReference type="ChEBI" id="CHEBI:33738"/>
        <dbReference type="ChEBI" id="CHEBI:49552"/>
        <dbReference type="EC" id="1.97.1.12"/>
    </reaction>
</comment>
<comment type="cofactor">
    <text evidence="1">P700 is a chlorophyll a/chlorophyll a' dimer, A0 is one or more chlorophyll a, A1 is one or both phylloquinones and FX is a shared 4Fe-4S iron-sulfur center.</text>
</comment>
<comment type="subunit">
    <text evidence="1">The PsaA/B heterodimer binds the P700 chlorophyll special pair and subsequent electron acceptors. PSI consists of a core antenna complex that captures photons, and an electron transfer chain that converts photonic excitation into a charge separation. The eukaryotic PSI reaction center is composed of at least 11 subunits.</text>
</comment>
<comment type="subcellular location">
    <subcellularLocation>
        <location evidence="1">Plastid</location>
        <location evidence="1">Chloroplast thylakoid membrane</location>
        <topology evidence="1">Multi-pass membrane protein</topology>
    </subcellularLocation>
</comment>
<comment type="similarity">
    <text evidence="1">Belongs to the PsaA/PsaB family.</text>
</comment>
<protein>
    <recommendedName>
        <fullName evidence="1">Photosystem I P700 chlorophyll a apoprotein A2</fullName>
        <ecNumber evidence="1">1.97.1.12</ecNumber>
    </recommendedName>
    <alternativeName>
        <fullName evidence="1">PSI-B</fullName>
    </alternativeName>
    <alternativeName>
        <fullName evidence="1">PsaB</fullName>
    </alternativeName>
</protein>
<keyword id="KW-0004">4Fe-4S</keyword>
<keyword id="KW-0148">Chlorophyll</keyword>
<keyword id="KW-0150">Chloroplast</keyword>
<keyword id="KW-0157">Chromophore</keyword>
<keyword id="KW-0249">Electron transport</keyword>
<keyword id="KW-0408">Iron</keyword>
<keyword id="KW-0411">Iron-sulfur</keyword>
<keyword id="KW-0460">Magnesium</keyword>
<keyword id="KW-0472">Membrane</keyword>
<keyword id="KW-0479">Metal-binding</keyword>
<keyword id="KW-0560">Oxidoreductase</keyword>
<keyword id="KW-0602">Photosynthesis</keyword>
<keyword id="KW-0603">Photosystem I</keyword>
<keyword id="KW-0934">Plastid</keyword>
<keyword id="KW-0793">Thylakoid</keyword>
<keyword id="KW-0812">Transmembrane</keyword>
<keyword id="KW-1133">Transmembrane helix</keyword>
<keyword id="KW-0813">Transport</keyword>
<sequence>MASRFPKFSQGLSQDPTTRRIWFGIATAHDFESHDGITEEKLYQKIFASHFGQLAVIFLWTSGNLFHVAWQGNFEAWSQDPLHVRPIAHAIWDPHFGQPAVEAFTRGGASGPVNISYSGVYQWWYTQGIRTNLELYQGALFLLGLAAVSLAAGWLHLQPKWQPKISWFKNAESRLNHHLSGLFGVSSLAWSGHLVHVAIPESRGQHVGWDNLLTTLPHPAGLAPFFSGQWSVYSQNPDSASHLFSTSQGSGTAILTFLGGFHPQTQSLWLTDIAHHHLAIAVLFIIAGHQYRTNFGIGHSIREILESHVPPGGGLGQGHKGLYDTLNNSLHFQLGLALASLGVITSLVAQHMYSLPSYAFIAQDFTTQAALYTHHQYIAGFIMSGAFAHGAIFFIRDYNPEQNKGNVLARMLEHKEAIISHLSWASLFLGFHTLGLYVHNDVVQAFGNPEKQILIEPVFAQWIQSSHGKTLYGFDVFLSSTASPAFYAGQSLWLPGWLDSINSNTNSLFLTIGPGDFLVHHAIALGLHTTTLILVKGALDARGSKLMPDKKEFGYSFPCDGPGRGGTCDISAWDAFYLAIFWMLNTIGWVTFYWHWKHLALWQGNAAQFNESSTYLMGWLRDYLWLNSSQLINGYNPFGMNSLSVWAWMFLFGHLIWATGFMFLISWRGYWQELIETLAWAHERTPLANLVRWKDKPVALSIVQARLVGLAHFSVGYIFTYAAFLIASTSGKFG</sequence>
<proteinExistence type="inferred from homology"/>
<accession>Q8M9V9</accession>